<reference key="1">
    <citation type="submission" date="2005-03" db="EMBL/GenBank/DDBJ databases">
        <title>Comparison of the complete genome sequences of Rhodococcus erythropolis PR4 and Rhodococcus opacus B4.</title>
        <authorList>
            <person name="Takarada H."/>
            <person name="Sekine M."/>
            <person name="Hosoyama A."/>
            <person name="Yamada R."/>
            <person name="Fujisawa T."/>
            <person name="Omata S."/>
            <person name="Shimizu A."/>
            <person name="Tsukatani N."/>
            <person name="Tanikawa S."/>
            <person name="Fujita N."/>
            <person name="Harayama S."/>
        </authorList>
    </citation>
    <scope>NUCLEOTIDE SEQUENCE [LARGE SCALE GENOMIC DNA]</scope>
    <source>
        <strain>PR4 / NBRC 100887</strain>
    </source>
</reference>
<accession>C0ZY18</accession>
<proteinExistence type="inferred from homology"/>
<evidence type="ECO:0000255" key="1">
    <source>
        <dbReference type="HAMAP-Rule" id="MF_00040"/>
    </source>
</evidence>
<feature type="chain" id="PRO_1000202108" description="Ribosome-recycling factor">
    <location>
        <begin position="1"/>
        <end position="185"/>
    </location>
</feature>
<protein>
    <recommendedName>
        <fullName evidence="1">Ribosome-recycling factor</fullName>
        <shortName evidence="1">RRF</shortName>
    </recommendedName>
    <alternativeName>
        <fullName evidence="1">Ribosome-releasing factor</fullName>
    </alternativeName>
</protein>
<name>RRF_RHOE4</name>
<comment type="function">
    <text evidence="1">Responsible for the release of ribosomes from messenger RNA at the termination of protein biosynthesis. May increase the efficiency of translation by recycling ribosomes from one round of translation to another.</text>
</comment>
<comment type="subcellular location">
    <subcellularLocation>
        <location evidence="1">Cytoplasm</location>
    </subcellularLocation>
</comment>
<comment type="similarity">
    <text evidence="1">Belongs to the RRF family.</text>
</comment>
<dbReference type="EMBL" id="AP008957">
    <property type="protein sequence ID" value="BAH33253.1"/>
    <property type="molecule type" value="Genomic_DNA"/>
</dbReference>
<dbReference type="RefSeq" id="WP_003942777.1">
    <property type="nucleotide sequence ID" value="NC_012490.1"/>
</dbReference>
<dbReference type="SMR" id="C0ZY18"/>
<dbReference type="GeneID" id="93803472"/>
<dbReference type="KEGG" id="rer:RER_25450"/>
<dbReference type="eggNOG" id="COG0233">
    <property type="taxonomic scope" value="Bacteria"/>
</dbReference>
<dbReference type="HOGENOM" id="CLU_073981_2_0_11"/>
<dbReference type="Proteomes" id="UP000002204">
    <property type="component" value="Chromosome"/>
</dbReference>
<dbReference type="GO" id="GO:0005737">
    <property type="term" value="C:cytoplasm"/>
    <property type="evidence" value="ECO:0007669"/>
    <property type="project" value="UniProtKB-SubCell"/>
</dbReference>
<dbReference type="GO" id="GO:0043023">
    <property type="term" value="F:ribosomal large subunit binding"/>
    <property type="evidence" value="ECO:0007669"/>
    <property type="project" value="TreeGrafter"/>
</dbReference>
<dbReference type="GO" id="GO:0006415">
    <property type="term" value="P:translational termination"/>
    <property type="evidence" value="ECO:0007669"/>
    <property type="project" value="UniProtKB-UniRule"/>
</dbReference>
<dbReference type="CDD" id="cd00520">
    <property type="entry name" value="RRF"/>
    <property type="match status" value="1"/>
</dbReference>
<dbReference type="FunFam" id="1.10.132.20:FF:000001">
    <property type="entry name" value="Ribosome-recycling factor"/>
    <property type="match status" value="1"/>
</dbReference>
<dbReference type="FunFam" id="3.30.1360.40:FF:000001">
    <property type="entry name" value="Ribosome-recycling factor"/>
    <property type="match status" value="1"/>
</dbReference>
<dbReference type="Gene3D" id="3.30.1360.40">
    <property type="match status" value="1"/>
</dbReference>
<dbReference type="Gene3D" id="1.10.132.20">
    <property type="entry name" value="Ribosome-recycling factor"/>
    <property type="match status" value="1"/>
</dbReference>
<dbReference type="HAMAP" id="MF_00040">
    <property type="entry name" value="RRF"/>
    <property type="match status" value="1"/>
</dbReference>
<dbReference type="InterPro" id="IPR002661">
    <property type="entry name" value="Ribosome_recyc_fac"/>
</dbReference>
<dbReference type="InterPro" id="IPR023584">
    <property type="entry name" value="Ribosome_recyc_fac_dom"/>
</dbReference>
<dbReference type="InterPro" id="IPR036191">
    <property type="entry name" value="RRF_sf"/>
</dbReference>
<dbReference type="NCBIfam" id="TIGR00496">
    <property type="entry name" value="frr"/>
    <property type="match status" value="1"/>
</dbReference>
<dbReference type="PANTHER" id="PTHR20982:SF3">
    <property type="entry name" value="MITOCHONDRIAL RIBOSOME RECYCLING FACTOR PSEUDO 1"/>
    <property type="match status" value="1"/>
</dbReference>
<dbReference type="PANTHER" id="PTHR20982">
    <property type="entry name" value="RIBOSOME RECYCLING FACTOR"/>
    <property type="match status" value="1"/>
</dbReference>
<dbReference type="Pfam" id="PF01765">
    <property type="entry name" value="RRF"/>
    <property type="match status" value="1"/>
</dbReference>
<dbReference type="SUPFAM" id="SSF55194">
    <property type="entry name" value="Ribosome recycling factor, RRF"/>
    <property type="match status" value="1"/>
</dbReference>
<sequence length="185" mass="20655">MIDEALFEAEEKMEKAVTVAKDDLGSVRTGRANPGMFSRIVIDYYGSITPITQLASINVPEARMVIVKPYEASQLNAIETAIRNSDLGVNPSNDGSIIRISVPQLTEERRRELVKQAKSKGEDSKVTLRNIRRKAMDELGRIQKDGEAGEDEVGRAEKELDKTTAKYVHTVEELVKHKEAELMEV</sequence>
<keyword id="KW-0963">Cytoplasm</keyword>
<keyword id="KW-0648">Protein biosynthesis</keyword>
<organism>
    <name type="scientific">Rhodococcus erythropolis (strain PR4 / NBRC 100887)</name>
    <dbReference type="NCBI Taxonomy" id="234621"/>
    <lineage>
        <taxon>Bacteria</taxon>
        <taxon>Bacillati</taxon>
        <taxon>Actinomycetota</taxon>
        <taxon>Actinomycetes</taxon>
        <taxon>Mycobacteriales</taxon>
        <taxon>Nocardiaceae</taxon>
        <taxon>Rhodococcus</taxon>
        <taxon>Rhodococcus erythropolis group</taxon>
    </lineage>
</organism>
<gene>
    <name evidence="1" type="primary">frr</name>
    <name type="ordered locus">RER_25450</name>
</gene>